<keyword id="KW-0002">3D-structure</keyword>
<keyword id="KW-0903">Direct protein sequencing</keyword>
<keyword id="KW-0227">DNA damage</keyword>
<keyword id="KW-0234">DNA repair</keyword>
<keyword id="KW-0378">Hydrolase</keyword>
<keyword id="KW-0479">Metal-binding</keyword>
<keyword id="KW-1185">Reference proteome</keyword>
<keyword id="KW-0862">Zinc</keyword>
<proteinExistence type="evidence at protein level"/>
<comment type="function">
    <text evidence="3">Hydrolysis of the deoxyribose N-glycosidic bond to excise 3-methyladenine from the damaged DNA polymer formed by alkylation lesions.</text>
</comment>
<comment type="catalytic activity">
    <reaction evidence="3">
        <text>Hydrolysis of alkylated DNA, releasing 3-methyladenine.</text>
        <dbReference type="EC" id="3.2.2.20"/>
    </reaction>
</comment>
<comment type="activity regulation">
    <text evidence="3">Activity is controlled by product inhibition.</text>
</comment>
<comment type="interaction">
    <interactant intactId="EBI-558722">
        <id>P05100</id>
    </interactant>
    <interactant intactId="EBI-542683">
        <id>P0AFG8</id>
        <label>aceE</label>
    </interactant>
    <organismsDiffer>false</organismsDiffer>
    <experiments>2</experiments>
</comment>
<accession>P05100</accession>
<accession>Q2M7L0</accession>
<dbReference type="EC" id="3.2.2.20" evidence="3"/>
<dbReference type="EMBL" id="J02606">
    <property type="protein sequence ID" value="AAA24658.1"/>
    <property type="molecule type" value="Genomic_DNA"/>
</dbReference>
<dbReference type="EMBL" id="X03845">
    <property type="protein sequence ID" value="CAA27472.1"/>
    <property type="molecule type" value="Genomic_DNA"/>
</dbReference>
<dbReference type="EMBL" id="U00039">
    <property type="protein sequence ID" value="AAB18526.1"/>
    <property type="molecule type" value="Genomic_DNA"/>
</dbReference>
<dbReference type="EMBL" id="U00096">
    <property type="protein sequence ID" value="AAC76573.1"/>
    <property type="molecule type" value="Genomic_DNA"/>
</dbReference>
<dbReference type="EMBL" id="AP009048">
    <property type="protein sequence ID" value="BAE77746.1"/>
    <property type="molecule type" value="Genomic_DNA"/>
</dbReference>
<dbReference type="PIR" id="A24604">
    <property type="entry name" value="DGECM1"/>
</dbReference>
<dbReference type="RefSeq" id="NP_418005.1">
    <property type="nucleotide sequence ID" value="NC_000913.3"/>
</dbReference>
<dbReference type="RefSeq" id="WP_000438957.1">
    <property type="nucleotide sequence ID" value="NZ_SSZK01000068.1"/>
</dbReference>
<dbReference type="PDB" id="1LMZ">
    <property type="method" value="NMR"/>
    <property type="chains" value="A=1-187"/>
</dbReference>
<dbReference type="PDB" id="1NKU">
    <property type="method" value="NMR"/>
    <property type="chains" value="A=1-187"/>
</dbReference>
<dbReference type="PDB" id="1P7M">
    <property type="method" value="NMR"/>
    <property type="chains" value="A=1-187"/>
</dbReference>
<dbReference type="PDBsum" id="1LMZ"/>
<dbReference type="PDBsum" id="1NKU"/>
<dbReference type="PDBsum" id="1P7M"/>
<dbReference type="BMRB" id="P05100"/>
<dbReference type="SMR" id="P05100"/>
<dbReference type="BioGRID" id="4261555">
    <property type="interactions" value="196"/>
</dbReference>
<dbReference type="BioGRID" id="851471">
    <property type="interactions" value="1"/>
</dbReference>
<dbReference type="DIP" id="DIP-10950N"/>
<dbReference type="FunCoup" id="P05100">
    <property type="interactions" value="235"/>
</dbReference>
<dbReference type="IntAct" id="P05100">
    <property type="interactions" value="5"/>
</dbReference>
<dbReference type="STRING" id="511145.b3549"/>
<dbReference type="BindingDB" id="P05100"/>
<dbReference type="ChEMBL" id="CHEMBL2295563"/>
<dbReference type="DrugBank" id="DB04104">
    <property type="generic name" value="3-Methyladenine"/>
</dbReference>
<dbReference type="jPOST" id="P05100"/>
<dbReference type="PaxDb" id="511145-b3549"/>
<dbReference type="EnsemblBacteria" id="AAC76573">
    <property type="protein sequence ID" value="AAC76573"/>
    <property type="gene ID" value="b3549"/>
</dbReference>
<dbReference type="GeneID" id="947137"/>
<dbReference type="KEGG" id="ecj:JW3518"/>
<dbReference type="KEGG" id="eco:b3549"/>
<dbReference type="KEGG" id="ecoc:C3026_19240"/>
<dbReference type="PATRIC" id="fig|1411691.4.peg.3165"/>
<dbReference type="EchoBASE" id="EB0979"/>
<dbReference type="eggNOG" id="COG2818">
    <property type="taxonomic scope" value="Bacteria"/>
</dbReference>
<dbReference type="HOGENOM" id="CLU_083758_1_0_6"/>
<dbReference type="InParanoid" id="P05100"/>
<dbReference type="OMA" id="HMQATGM"/>
<dbReference type="OrthoDB" id="9807664at2"/>
<dbReference type="PhylomeDB" id="P05100"/>
<dbReference type="BioCyc" id="EcoCyc:EG10986-MONOMER"/>
<dbReference type="BioCyc" id="MetaCyc:EG10986-MONOMER"/>
<dbReference type="BRENDA" id="3.2.2.20">
    <property type="organism ID" value="2026"/>
</dbReference>
<dbReference type="EvolutionaryTrace" id="P05100"/>
<dbReference type="PRO" id="PR:P05100"/>
<dbReference type="Proteomes" id="UP000000625">
    <property type="component" value="Chromosome"/>
</dbReference>
<dbReference type="GO" id="GO:0008725">
    <property type="term" value="F:DNA-3-methyladenine glycosylase activity"/>
    <property type="evidence" value="ECO:0000269"/>
    <property type="project" value="EcoCyc"/>
</dbReference>
<dbReference type="GO" id="GO:0046872">
    <property type="term" value="F:metal ion binding"/>
    <property type="evidence" value="ECO:0007669"/>
    <property type="project" value="UniProtKB-KW"/>
</dbReference>
<dbReference type="GO" id="GO:0006284">
    <property type="term" value="P:base-excision repair"/>
    <property type="evidence" value="ECO:0007669"/>
    <property type="project" value="InterPro"/>
</dbReference>
<dbReference type="GO" id="GO:0006307">
    <property type="term" value="P:DNA alkylation repair"/>
    <property type="evidence" value="ECO:0000269"/>
    <property type="project" value="EcoCyc"/>
</dbReference>
<dbReference type="FunFam" id="1.10.340.30:FF:000009">
    <property type="entry name" value="DNA-3-methyladenine glycosylase I"/>
    <property type="match status" value="1"/>
</dbReference>
<dbReference type="Gene3D" id="1.10.340.30">
    <property type="entry name" value="Hypothetical protein, domain 2"/>
    <property type="match status" value="1"/>
</dbReference>
<dbReference type="InterPro" id="IPR005019">
    <property type="entry name" value="Adenine_glyco"/>
</dbReference>
<dbReference type="InterPro" id="IPR052891">
    <property type="entry name" value="DNA-3mA_glycosylase"/>
</dbReference>
<dbReference type="InterPro" id="IPR011257">
    <property type="entry name" value="DNA_glycosylase"/>
</dbReference>
<dbReference type="InterPro" id="IPR004597">
    <property type="entry name" value="Tag"/>
</dbReference>
<dbReference type="NCBIfam" id="NF007678">
    <property type="entry name" value="PRK10353.1"/>
    <property type="match status" value="1"/>
</dbReference>
<dbReference type="NCBIfam" id="TIGR00624">
    <property type="entry name" value="tag"/>
    <property type="match status" value="1"/>
</dbReference>
<dbReference type="PANTHER" id="PTHR30037">
    <property type="entry name" value="DNA-3-METHYLADENINE GLYCOSYLASE 1"/>
    <property type="match status" value="1"/>
</dbReference>
<dbReference type="PANTHER" id="PTHR30037:SF4">
    <property type="entry name" value="DNA-3-METHYLADENINE GLYCOSYLASE I"/>
    <property type="match status" value="1"/>
</dbReference>
<dbReference type="Pfam" id="PF03352">
    <property type="entry name" value="Adenine_glyco"/>
    <property type="match status" value="1"/>
</dbReference>
<dbReference type="SUPFAM" id="SSF48150">
    <property type="entry name" value="DNA-glycosylase"/>
    <property type="match status" value="1"/>
</dbReference>
<protein>
    <recommendedName>
        <fullName>DNA-3-methyladenine glycosylase 1</fullName>
        <ecNumber evidence="3">3.2.2.20</ecNumber>
    </recommendedName>
    <alternativeName>
        <fullName>3-methyladenine-DNA glycosylase I, constitutive</fullName>
        <shortName>TAG I</shortName>
    </alternativeName>
    <alternativeName>
        <fullName>DNA-3-methyladenine glycosidase I</fullName>
    </alternativeName>
    <alternativeName>
        <fullName>DNA-3-methyladenine glycosylase I</fullName>
    </alternativeName>
</protein>
<reference key="1">
    <citation type="journal article" date="1986" name="J. Biol. Chem.">
        <title>Purification and structure of 3-methyladenine-DNA glycosylase I of Escherichia coli.</title>
        <authorList>
            <person name="Sakumi K."/>
            <person name="Nakabeppu Y."/>
            <person name="Yamamoto Y."/>
            <person name="Kawabata S."/>
            <person name="Iwanaga S."/>
            <person name="Sekiguchi M."/>
        </authorList>
    </citation>
    <scope>NUCLEOTIDE SEQUENCE [GENOMIC DNA]</scope>
    <scope>PROTEIN SEQUENCE OF 1-29</scope>
    <scope>FUNCTION</scope>
    <scope>CATALYTIC ACTIVITY</scope>
    <scope>ACTIVITY REGULATION</scope>
</reference>
<reference key="2">
    <citation type="journal article" date="1986" name="Nucleic Acids Res.">
        <title>Nucleotide sequence of the tag gene from Escherichia coli.</title>
        <authorList>
            <person name="Steinum A.-L."/>
            <person name="Seeberg E."/>
        </authorList>
    </citation>
    <scope>NUCLEOTIDE SEQUENCE [GENOMIC DNA]</scope>
</reference>
<reference key="3">
    <citation type="journal article" date="1994" name="Nucleic Acids Res.">
        <title>Analysis of the Escherichia coli genome. V. DNA sequence of the region from 76.0 to 81.5 minutes.</title>
        <authorList>
            <person name="Sofia H.J."/>
            <person name="Burland V."/>
            <person name="Daniels D.L."/>
            <person name="Plunkett G. III"/>
            <person name="Blattner F.R."/>
        </authorList>
    </citation>
    <scope>NUCLEOTIDE SEQUENCE [LARGE SCALE GENOMIC DNA]</scope>
    <source>
        <strain>K12 / MG1655 / ATCC 47076</strain>
    </source>
</reference>
<reference key="4">
    <citation type="journal article" date="1997" name="Science">
        <title>The complete genome sequence of Escherichia coli K-12.</title>
        <authorList>
            <person name="Blattner F.R."/>
            <person name="Plunkett G. III"/>
            <person name="Bloch C.A."/>
            <person name="Perna N.T."/>
            <person name="Burland V."/>
            <person name="Riley M."/>
            <person name="Collado-Vides J."/>
            <person name="Glasner J.D."/>
            <person name="Rode C.K."/>
            <person name="Mayhew G.F."/>
            <person name="Gregor J."/>
            <person name="Davis N.W."/>
            <person name="Kirkpatrick H.A."/>
            <person name="Goeden M.A."/>
            <person name="Rose D.J."/>
            <person name="Mau B."/>
            <person name="Shao Y."/>
        </authorList>
    </citation>
    <scope>NUCLEOTIDE SEQUENCE [LARGE SCALE GENOMIC DNA]</scope>
    <source>
        <strain>K12 / MG1655 / ATCC 47076</strain>
    </source>
</reference>
<reference key="5">
    <citation type="journal article" date="2006" name="Mol. Syst. Biol.">
        <title>Highly accurate genome sequences of Escherichia coli K-12 strains MG1655 and W3110.</title>
        <authorList>
            <person name="Hayashi K."/>
            <person name="Morooka N."/>
            <person name="Yamamoto Y."/>
            <person name="Fujita K."/>
            <person name="Isono K."/>
            <person name="Choi S."/>
            <person name="Ohtsubo E."/>
            <person name="Baba T."/>
            <person name="Wanner B.L."/>
            <person name="Mori H."/>
            <person name="Horiuchi T."/>
        </authorList>
    </citation>
    <scope>NUCLEOTIDE SEQUENCE [LARGE SCALE GENOMIC DNA]</scope>
    <source>
        <strain>K12 / W3110 / ATCC 27325 / DSM 5911</strain>
    </source>
</reference>
<reference key="6">
    <citation type="journal article" date="1997" name="Electrophoresis">
        <title>Escherichia coli proteome analysis using the gene-protein database.</title>
        <authorList>
            <person name="VanBogelen R.A."/>
            <person name="Abshire K.Z."/>
            <person name="Moldover B."/>
            <person name="Olson E.R."/>
            <person name="Neidhardt F.C."/>
        </authorList>
    </citation>
    <scope>IDENTIFICATION BY 2D-GEL</scope>
</reference>
<reference evidence="6" key="7">
    <citation type="journal article" date="2002" name="Nat. Struct. Biol.">
        <title>3-Methyladenine DNA glycosylase I is an unexpected helix-hairpin-helix superfamily member.</title>
        <authorList>
            <person name="Drohat A.C."/>
            <person name="Kwon K."/>
            <person name="Krosky D.J."/>
            <person name="Stivers J.T."/>
        </authorList>
    </citation>
    <scope>STRUCTURE BY NMR</scope>
</reference>
<reference evidence="7" key="8">
    <citation type="journal article" date="2003" name="J. Biol. Chem.">
        <title>A novel zinc snap motif conveys structural stability to 3-methyladenine DNA glycosylase I.</title>
        <authorList>
            <person name="Kwon K."/>
            <person name="Cao C."/>
            <person name="Stivers J.T."/>
        </authorList>
    </citation>
    <scope>STRUCTURE BY NMR IN COMPLEX WITH ZINC</scope>
    <scope>ZINC-BINDING SITES</scope>
</reference>
<reference evidence="8" key="9">
    <citation type="journal article" date="2003" name="J. Biol. Chem.">
        <title>Solution structure and base perturbation studies reveal a novel mode of alkylated base recognition by 3-methyladenine DNA glycosylase I.</title>
        <authorList>
            <person name="Cao C."/>
            <person name="Kwon K."/>
            <person name="Jiang Y.L."/>
            <person name="Drohat A.C."/>
            <person name="Stivers J.T."/>
        </authorList>
    </citation>
    <scope>STRUCTURE BY NMR IN COMPLEX WITH 3-METHYLADENINE AND ZINC</scope>
    <scope>ZINC-BINDING SITES</scope>
</reference>
<feature type="chain" id="PRO_0000194877" description="DNA-3-methyladenine glycosylase 1">
    <location>
        <begin position="1"/>
        <end position="187"/>
    </location>
</feature>
<feature type="binding site" evidence="1 2 7 8">
    <location>
        <position position="4"/>
    </location>
    <ligand>
        <name>Zn(2+)</name>
        <dbReference type="ChEBI" id="CHEBI:29105"/>
    </ligand>
</feature>
<feature type="binding site" evidence="1 2 7 8">
    <location>
        <position position="17"/>
    </location>
    <ligand>
        <name>Zn(2+)</name>
        <dbReference type="ChEBI" id="CHEBI:29105"/>
    </ligand>
</feature>
<feature type="binding site" evidence="1 2 7 8">
    <location>
        <position position="175"/>
    </location>
    <ligand>
        <name>Zn(2+)</name>
        <dbReference type="ChEBI" id="CHEBI:29105"/>
    </ligand>
</feature>
<feature type="binding site" evidence="1 2 7 8">
    <location>
        <position position="179"/>
    </location>
    <ligand>
        <name>Zn(2+)</name>
        <dbReference type="ChEBI" id="CHEBI:29105"/>
    </ligand>
</feature>
<feature type="turn" evidence="10">
    <location>
        <begin position="5"/>
        <end position="9"/>
    </location>
</feature>
<feature type="helix" evidence="9">
    <location>
        <begin position="12"/>
        <end position="19"/>
    </location>
</feature>
<feature type="strand" evidence="9">
    <location>
        <begin position="20"/>
        <end position="23"/>
    </location>
</feature>
<feature type="helix" evidence="9">
    <location>
        <begin position="28"/>
        <end position="39"/>
    </location>
</feature>
<feature type="turn" evidence="9">
    <location>
        <begin position="40"/>
        <end position="43"/>
    </location>
</feature>
<feature type="helix" evidence="9">
    <location>
        <begin position="46"/>
        <end position="70"/>
    </location>
</feature>
<feature type="helix" evidence="9">
    <location>
        <begin position="73"/>
        <end position="81"/>
    </location>
</feature>
<feature type="strand" evidence="9">
    <location>
        <begin position="82"/>
        <end position="85"/>
    </location>
</feature>
<feature type="helix" evidence="9">
    <location>
        <begin position="90"/>
        <end position="107"/>
    </location>
</feature>
<feature type="helix" evidence="9">
    <location>
        <begin position="112"/>
        <end position="118"/>
    </location>
</feature>
<feature type="turn" evidence="9">
    <location>
        <begin position="119"/>
        <end position="122"/>
    </location>
</feature>
<feature type="turn" evidence="9">
    <location>
        <begin position="132"/>
        <end position="134"/>
    </location>
</feature>
<feature type="helix" evidence="9">
    <location>
        <begin position="140"/>
        <end position="152"/>
    </location>
</feature>
<feature type="helix" evidence="9">
    <location>
        <begin position="159"/>
        <end position="169"/>
    </location>
</feature>
<feature type="strand" evidence="9">
    <location>
        <begin position="171"/>
        <end position="173"/>
    </location>
</feature>
<feature type="strand" evidence="10">
    <location>
        <begin position="175"/>
        <end position="177"/>
    </location>
</feature>
<feature type="strand" evidence="9">
    <location>
        <begin position="179"/>
        <end position="181"/>
    </location>
</feature>
<sequence>MERCGWVSQDPLYIAYHDNEWGVPETDSKKLFEMICLEGQQAGLSWITVLKKRENYRACFHQFDPVKVAAMQEEDVERLVQDAGIIRHRGKIQAIIGNARAYLQMEQNGEPFVDFVWSFVNHQPQVTQATTLSEIPTSTSASDALSKALKKRGFKFVGTTICYSFMQACGLVNDHVVGCCCYPGNKP</sequence>
<gene>
    <name evidence="4 5" type="primary">tag</name>
    <name type="ordered locus">b3549</name>
    <name type="ordered locus">JW3518</name>
</gene>
<organism>
    <name type="scientific">Escherichia coli (strain K12)</name>
    <dbReference type="NCBI Taxonomy" id="83333"/>
    <lineage>
        <taxon>Bacteria</taxon>
        <taxon>Pseudomonadati</taxon>
        <taxon>Pseudomonadota</taxon>
        <taxon>Gammaproteobacteria</taxon>
        <taxon>Enterobacterales</taxon>
        <taxon>Enterobacteriaceae</taxon>
        <taxon>Escherichia</taxon>
    </lineage>
</organism>
<evidence type="ECO:0000269" key="1">
    <source>
    </source>
</evidence>
<evidence type="ECO:0000269" key="2">
    <source>
    </source>
</evidence>
<evidence type="ECO:0000269" key="3">
    <source>
    </source>
</evidence>
<evidence type="ECO:0000303" key="4">
    <source>
    </source>
</evidence>
<evidence type="ECO:0000303" key="5">
    <source>
    </source>
</evidence>
<evidence type="ECO:0007744" key="6">
    <source>
        <dbReference type="PDB" id="1LMZ"/>
    </source>
</evidence>
<evidence type="ECO:0007744" key="7">
    <source>
        <dbReference type="PDB" id="1NKU"/>
    </source>
</evidence>
<evidence type="ECO:0007744" key="8">
    <source>
        <dbReference type="PDB" id="1P7M"/>
    </source>
</evidence>
<evidence type="ECO:0007829" key="9">
    <source>
        <dbReference type="PDB" id="1LMZ"/>
    </source>
</evidence>
<evidence type="ECO:0007829" key="10">
    <source>
        <dbReference type="PDB" id="1P7M"/>
    </source>
</evidence>
<name>3MG1_ECOLI</name>